<feature type="chain" id="PRO_1000049062" description="Large ribosomal subunit protein bL20">
    <location>
        <begin position="1"/>
        <end position="122"/>
    </location>
</feature>
<proteinExistence type="inferred from homology"/>
<name>RL20_SACEN</name>
<evidence type="ECO:0000255" key="1">
    <source>
        <dbReference type="HAMAP-Rule" id="MF_00382"/>
    </source>
</evidence>
<evidence type="ECO:0000305" key="2"/>
<reference key="1">
    <citation type="journal article" date="2007" name="Nat. Biotechnol.">
        <title>Complete genome sequence of the erythromycin-producing bacterium Saccharopolyspora erythraea NRRL23338.</title>
        <authorList>
            <person name="Oliynyk M."/>
            <person name="Samborskyy M."/>
            <person name="Lester J.B."/>
            <person name="Mironenko T."/>
            <person name="Scott N."/>
            <person name="Dickens S."/>
            <person name="Haydock S.F."/>
            <person name="Leadlay P.F."/>
        </authorList>
    </citation>
    <scope>NUCLEOTIDE SEQUENCE [LARGE SCALE GENOMIC DNA]</scope>
    <source>
        <strain>ATCC 11635 / DSM 40517 / JCM 4748 / NBRC 13426 / NCIMB 8594 / NRRL 2338</strain>
    </source>
</reference>
<comment type="function">
    <text evidence="1">Binds directly to 23S ribosomal RNA and is necessary for the in vitro assembly process of the 50S ribosomal subunit. It is not involved in the protein synthesizing functions of that subunit.</text>
</comment>
<comment type="similarity">
    <text evidence="1">Belongs to the bacterial ribosomal protein bL20 family.</text>
</comment>
<accession>A4FKE3</accession>
<keyword id="KW-1185">Reference proteome</keyword>
<keyword id="KW-0687">Ribonucleoprotein</keyword>
<keyword id="KW-0689">Ribosomal protein</keyword>
<keyword id="KW-0694">RNA-binding</keyword>
<keyword id="KW-0699">rRNA-binding</keyword>
<protein>
    <recommendedName>
        <fullName evidence="1">Large ribosomal subunit protein bL20</fullName>
    </recommendedName>
    <alternativeName>
        <fullName evidence="2">50S ribosomal protein L20</fullName>
    </alternativeName>
</protein>
<sequence>MARVKRAVNAQKKRRTILESAKGYRGQRSRLYRKAKEQMLHSMTYSYRDRRARKGDFRKLWITRINAATRQNGMSYNRFVQGLKAAGVEVDRKILAELAVNDSQAFAALVDVARQNLPEGAA</sequence>
<organism>
    <name type="scientific">Saccharopolyspora erythraea (strain ATCC 11635 / DSM 40517 / JCM 4748 / NBRC 13426 / NCIMB 8594 / NRRL 2338)</name>
    <dbReference type="NCBI Taxonomy" id="405948"/>
    <lineage>
        <taxon>Bacteria</taxon>
        <taxon>Bacillati</taxon>
        <taxon>Actinomycetota</taxon>
        <taxon>Actinomycetes</taxon>
        <taxon>Pseudonocardiales</taxon>
        <taxon>Pseudonocardiaceae</taxon>
        <taxon>Saccharopolyspora</taxon>
    </lineage>
</organism>
<dbReference type="EMBL" id="AM420293">
    <property type="protein sequence ID" value="CAM04518.1"/>
    <property type="molecule type" value="Genomic_DNA"/>
</dbReference>
<dbReference type="RefSeq" id="WP_009951173.1">
    <property type="nucleotide sequence ID" value="NC_009142.1"/>
</dbReference>
<dbReference type="SMR" id="A4FKE3"/>
<dbReference type="STRING" id="405948.SACE_5279"/>
<dbReference type="KEGG" id="sen:SACE_5279"/>
<dbReference type="eggNOG" id="COG0292">
    <property type="taxonomic scope" value="Bacteria"/>
</dbReference>
<dbReference type="HOGENOM" id="CLU_123265_0_0_11"/>
<dbReference type="OrthoDB" id="9808966at2"/>
<dbReference type="Proteomes" id="UP000006728">
    <property type="component" value="Chromosome"/>
</dbReference>
<dbReference type="GO" id="GO:1990904">
    <property type="term" value="C:ribonucleoprotein complex"/>
    <property type="evidence" value="ECO:0007669"/>
    <property type="project" value="UniProtKB-KW"/>
</dbReference>
<dbReference type="GO" id="GO:0005840">
    <property type="term" value="C:ribosome"/>
    <property type="evidence" value="ECO:0007669"/>
    <property type="project" value="UniProtKB-KW"/>
</dbReference>
<dbReference type="GO" id="GO:0019843">
    <property type="term" value="F:rRNA binding"/>
    <property type="evidence" value="ECO:0007669"/>
    <property type="project" value="UniProtKB-UniRule"/>
</dbReference>
<dbReference type="GO" id="GO:0003735">
    <property type="term" value="F:structural constituent of ribosome"/>
    <property type="evidence" value="ECO:0007669"/>
    <property type="project" value="InterPro"/>
</dbReference>
<dbReference type="GO" id="GO:0000027">
    <property type="term" value="P:ribosomal large subunit assembly"/>
    <property type="evidence" value="ECO:0007669"/>
    <property type="project" value="UniProtKB-UniRule"/>
</dbReference>
<dbReference type="GO" id="GO:0006412">
    <property type="term" value="P:translation"/>
    <property type="evidence" value="ECO:0007669"/>
    <property type="project" value="InterPro"/>
</dbReference>
<dbReference type="CDD" id="cd07026">
    <property type="entry name" value="Ribosomal_L20"/>
    <property type="match status" value="1"/>
</dbReference>
<dbReference type="FunFam" id="1.10.1900.20:FF:000001">
    <property type="entry name" value="50S ribosomal protein L20"/>
    <property type="match status" value="1"/>
</dbReference>
<dbReference type="Gene3D" id="6.10.160.10">
    <property type="match status" value="1"/>
</dbReference>
<dbReference type="Gene3D" id="1.10.1900.20">
    <property type="entry name" value="Ribosomal protein L20"/>
    <property type="match status" value="1"/>
</dbReference>
<dbReference type="HAMAP" id="MF_00382">
    <property type="entry name" value="Ribosomal_bL20"/>
    <property type="match status" value="1"/>
</dbReference>
<dbReference type="InterPro" id="IPR005813">
    <property type="entry name" value="Ribosomal_bL20"/>
</dbReference>
<dbReference type="InterPro" id="IPR049946">
    <property type="entry name" value="RIBOSOMAL_L20_CS"/>
</dbReference>
<dbReference type="InterPro" id="IPR035566">
    <property type="entry name" value="Ribosomal_protein_bL20_C"/>
</dbReference>
<dbReference type="NCBIfam" id="TIGR01032">
    <property type="entry name" value="rplT_bact"/>
    <property type="match status" value="1"/>
</dbReference>
<dbReference type="PANTHER" id="PTHR10986">
    <property type="entry name" value="39S RIBOSOMAL PROTEIN L20"/>
    <property type="match status" value="1"/>
</dbReference>
<dbReference type="Pfam" id="PF00453">
    <property type="entry name" value="Ribosomal_L20"/>
    <property type="match status" value="1"/>
</dbReference>
<dbReference type="PRINTS" id="PR00062">
    <property type="entry name" value="RIBOSOMALL20"/>
</dbReference>
<dbReference type="SUPFAM" id="SSF74731">
    <property type="entry name" value="Ribosomal protein L20"/>
    <property type="match status" value="1"/>
</dbReference>
<dbReference type="PROSITE" id="PS00937">
    <property type="entry name" value="RIBOSOMAL_L20"/>
    <property type="match status" value="1"/>
</dbReference>
<gene>
    <name evidence="1" type="primary">rplT</name>
    <name type="ordered locus">SACE_5279</name>
</gene>